<accession>Q02YT3</accession>
<comment type="function">
    <text evidence="1">Catalyzes the transfer of a methyl group from 5-methyltetrahydrofolate to homocysteine resulting in methionine formation.</text>
</comment>
<comment type="catalytic activity">
    <reaction evidence="1">
        <text>5-methyltetrahydropteroyltri-L-glutamate + L-homocysteine = tetrahydropteroyltri-L-glutamate + L-methionine</text>
        <dbReference type="Rhea" id="RHEA:21196"/>
        <dbReference type="ChEBI" id="CHEBI:57844"/>
        <dbReference type="ChEBI" id="CHEBI:58140"/>
        <dbReference type="ChEBI" id="CHEBI:58199"/>
        <dbReference type="ChEBI" id="CHEBI:58207"/>
        <dbReference type="EC" id="2.1.1.14"/>
    </reaction>
</comment>
<comment type="cofactor">
    <cofactor evidence="1">
        <name>Zn(2+)</name>
        <dbReference type="ChEBI" id="CHEBI:29105"/>
    </cofactor>
    <text evidence="1">Binds 1 zinc ion per subunit.</text>
</comment>
<comment type="pathway">
    <text evidence="1">Amino-acid biosynthesis; L-methionine biosynthesis via de novo pathway; L-methionine from L-homocysteine (MetE route): step 1/1.</text>
</comment>
<comment type="similarity">
    <text evidence="1">Belongs to the vitamin-B12 independent methionine synthase family.</text>
</comment>
<proteinExistence type="inferred from homology"/>
<evidence type="ECO:0000255" key="1">
    <source>
        <dbReference type="HAMAP-Rule" id="MF_00172"/>
    </source>
</evidence>
<reference key="1">
    <citation type="journal article" date="2006" name="Proc. Natl. Acad. Sci. U.S.A.">
        <title>Comparative genomics of the lactic acid bacteria.</title>
        <authorList>
            <person name="Makarova K.S."/>
            <person name="Slesarev A."/>
            <person name="Wolf Y.I."/>
            <person name="Sorokin A."/>
            <person name="Mirkin B."/>
            <person name="Koonin E.V."/>
            <person name="Pavlov A."/>
            <person name="Pavlova N."/>
            <person name="Karamychev V."/>
            <person name="Polouchine N."/>
            <person name="Shakhova V."/>
            <person name="Grigoriev I."/>
            <person name="Lou Y."/>
            <person name="Rohksar D."/>
            <person name="Lucas S."/>
            <person name="Huang K."/>
            <person name="Goodstein D.M."/>
            <person name="Hawkins T."/>
            <person name="Plengvidhya V."/>
            <person name="Welker D."/>
            <person name="Hughes J."/>
            <person name="Goh Y."/>
            <person name="Benson A."/>
            <person name="Baldwin K."/>
            <person name="Lee J.-H."/>
            <person name="Diaz-Muniz I."/>
            <person name="Dosti B."/>
            <person name="Smeianov V."/>
            <person name="Wechter W."/>
            <person name="Barabote R."/>
            <person name="Lorca G."/>
            <person name="Altermann E."/>
            <person name="Barrangou R."/>
            <person name="Ganesan B."/>
            <person name="Xie Y."/>
            <person name="Rawsthorne H."/>
            <person name="Tamir D."/>
            <person name="Parker C."/>
            <person name="Breidt F."/>
            <person name="Broadbent J.R."/>
            <person name="Hutkins R."/>
            <person name="O'Sullivan D."/>
            <person name="Steele J."/>
            <person name="Unlu G."/>
            <person name="Saier M.H. Jr."/>
            <person name="Klaenhammer T."/>
            <person name="Richardson P."/>
            <person name="Kozyavkin S."/>
            <person name="Weimer B.C."/>
            <person name="Mills D.A."/>
        </authorList>
    </citation>
    <scope>NUCLEOTIDE SEQUENCE [LARGE SCALE GENOMIC DNA]</scope>
    <source>
        <strain>SK11</strain>
    </source>
</reference>
<keyword id="KW-0028">Amino-acid biosynthesis</keyword>
<keyword id="KW-0479">Metal-binding</keyword>
<keyword id="KW-0486">Methionine biosynthesis</keyword>
<keyword id="KW-0489">Methyltransferase</keyword>
<keyword id="KW-0677">Repeat</keyword>
<keyword id="KW-0808">Transferase</keyword>
<keyword id="KW-0862">Zinc</keyword>
<protein>
    <recommendedName>
        <fullName evidence="1">5-methyltetrahydropteroyltriglutamate--homocysteine methyltransferase</fullName>
        <ecNumber evidence="1">2.1.1.14</ecNumber>
    </recommendedName>
    <alternativeName>
        <fullName evidence="1">Cobalamin-independent methionine synthase</fullName>
    </alternativeName>
    <alternativeName>
        <fullName evidence="1">Methionine synthase, vitamin-B12 independent isozyme</fullName>
    </alternativeName>
</protein>
<gene>
    <name evidence="1" type="primary">metE</name>
    <name type="ordered locus">LACR_1368</name>
</gene>
<name>METE_LACLS</name>
<organism>
    <name type="scientific">Lactococcus lactis subsp. cremoris (strain SK11)</name>
    <dbReference type="NCBI Taxonomy" id="272622"/>
    <lineage>
        <taxon>Bacteria</taxon>
        <taxon>Bacillati</taxon>
        <taxon>Bacillota</taxon>
        <taxon>Bacilli</taxon>
        <taxon>Lactobacillales</taxon>
        <taxon>Streptococcaceae</taxon>
        <taxon>Lactococcus</taxon>
        <taxon>Lactococcus cremoris subsp. cremoris</taxon>
    </lineage>
</organism>
<sequence length="757" mass="87130">MKKSIIAFPRIGSNRELKFALEKYFRKEISEAELQIVAKELRLESWKSQKEAGIDYPISNDFSFYDQTLDLSIALGVIPERYKKLKLNELDTLFALARGFQDEENDVKARPMKKWFNTNYHYIVPEISKETVIKANFSKLLNEYQEAKTAGFETRPTIIGPYTFLILADYLSGVTEDAILSDLIGAYTVLFDQLNNLGGEWLQIEEPALVLDQTEEEQQLFIKIYQELLKNKNKLKVLLQTYFGDLRDSYQEIIKLDFDGIGLDFVEGRESVKLVQKYGFPQDKLLFAGVVNGKNIWRNHYQKTLSLLKDLGNIDNIVINTSCSLQHVPVTTENEIKLSKEILNHFAFAKEKLVEVSEISEIYVKKNTSLLDKNIALFDKNRVQENIQLKQKITHLTDKDFIRTPSLVERRADQIKALRLPLLPTTTIGSFPQTPEVRKARLQYKRGELSKSDYEAFLEEKIKECLELQENIGLDVLVHGEFERNDMVEYFGEQLDGYIFTQKAWVQSYGTRCVKPPIVWGDITRPQAMTVRWSAYAQSQTSKPVKGMLTGPVTILNWSFPREDISLKESTLQLALAVQEEVLDLEKAGIKIIQIDEAALREKLPLRRSDWYSEYLDWSIPAFRLVHSKVKAETQIHTHMCYSEFEDIIPSIDAMDADVISFEASRSQLSIIDALKAHHFQTLVGPGVYDIHSPRIPSSQEIKIQLEKILNKLPIEQVWVNPDCGLKTRGNKETIPSLTHLVEATKEVRKEKITYDK</sequence>
<dbReference type="EC" id="2.1.1.14" evidence="1"/>
<dbReference type="EMBL" id="CP000425">
    <property type="protein sequence ID" value="ABJ72889.1"/>
    <property type="molecule type" value="Genomic_DNA"/>
</dbReference>
<dbReference type="RefSeq" id="WP_011676180.1">
    <property type="nucleotide sequence ID" value="NC_008527.1"/>
</dbReference>
<dbReference type="SMR" id="Q02YT3"/>
<dbReference type="KEGG" id="llc:LACR_1368"/>
<dbReference type="HOGENOM" id="CLU_013175_0_0_9"/>
<dbReference type="UniPathway" id="UPA00051">
    <property type="reaction ID" value="UER00082"/>
</dbReference>
<dbReference type="Proteomes" id="UP000000240">
    <property type="component" value="Chromosome"/>
</dbReference>
<dbReference type="GO" id="GO:0003871">
    <property type="term" value="F:5-methyltetrahydropteroyltriglutamate-homocysteine S-methyltransferase activity"/>
    <property type="evidence" value="ECO:0007669"/>
    <property type="project" value="UniProtKB-UniRule"/>
</dbReference>
<dbReference type="GO" id="GO:0008270">
    <property type="term" value="F:zinc ion binding"/>
    <property type="evidence" value="ECO:0007669"/>
    <property type="project" value="InterPro"/>
</dbReference>
<dbReference type="GO" id="GO:0009086">
    <property type="term" value="P:methionine biosynthetic process"/>
    <property type="evidence" value="ECO:0007669"/>
    <property type="project" value="UniProtKB-UniRule"/>
</dbReference>
<dbReference type="GO" id="GO:0032259">
    <property type="term" value="P:methylation"/>
    <property type="evidence" value="ECO:0007669"/>
    <property type="project" value="UniProtKB-KW"/>
</dbReference>
<dbReference type="CDD" id="cd03311">
    <property type="entry name" value="CIMS_C_terminal_like"/>
    <property type="match status" value="1"/>
</dbReference>
<dbReference type="CDD" id="cd03312">
    <property type="entry name" value="CIMS_N_terminal_like"/>
    <property type="match status" value="1"/>
</dbReference>
<dbReference type="Gene3D" id="3.20.20.210">
    <property type="match status" value="2"/>
</dbReference>
<dbReference type="HAMAP" id="MF_00172">
    <property type="entry name" value="Meth_synth"/>
    <property type="match status" value="1"/>
</dbReference>
<dbReference type="InterPro" id="IPR013215">
    <property type="entry name" value="Cbl-indep_Met_Synth_N"/>
</dbReference>
<dbReference type="InterPro" id="IPR006276">
    <property type="entry name" value="Cobalamin-indep_Met_synthase"/>
</dbReference>
<dbReference type="InterPro" id="IPR002629">
    <property type="entry name" value="Met_Synth_C/arc"/>
</dbReference>
<dbReference type="InterPro" id="IPR038071">
    <property type="entry name" value="UROD/MetE-like_sf"/>
</dbReference>
<dbReference type="NCBIfam" id="TIGR01371">
    <property type="entry name" value="met_syn_B12ind"/>
    <property type="match status" value="1"/>
</dbReference>
<dbReference type="NCBIfam" id="NF003556">
    <property type="entry name" value="PRK05222.1"/>
    <property type="match status" value="1"/>
</dbReference>
<dbReference type="PANTHER" id="PTHR30519">
    <property type="entry name" value="5-METHYLTETRAHYDROPTEROYLTRIGLUTAMATE--HOMOCYSTEINE METHYLTRANSFERASE"/>
    <property type="match status" value="1"/>
</dbReference>
<dbReference type="Pfam" id="PF08267">
    <property type="entry name" value="Meth_synt_1"/>
    <property type="match status" value="1"/>
</dbReference>
<dbReference type="Pfam" id="PF01717">
    <property type="entry name" value="Meth_synt_2"/>
    <property type="match status" value="1"/>
</dbReference>
<dbReference type="PIRSF" id="PIRSF000382">
    <property type="entry name" value="MeTrfase_B12_ind"/>
    <property type="match status" value="1"/>
</dbReference>
<dbReference type="SUPFAM" id="SSF51726">
    <property type="entry name" value="UROD/MetE-like"/>
    <property type="match status" value="2"/>
</dbReference>
<feature type="chain" id="PRO_1000017251" description="5-methyltetrahydropteroyltriglutamate--homocysteine methyltransferase">
    <location>
        <begin position="1"/>
        <end position="757"/>
    </location>
</feature>
<feature type="active site" description="Proton donor" evidence="1">
    <location>
        <position position="692"/>
    </location>
</feature>
<feature type="binding site" evidence="1">
    <location>
        <begin position="15"/>
        <end position="18"/>
    </location>
    <ligand>
        <name>5-methyltetrahydropteroyltri-L-glutamate</name>
        <dbReference type="ChEBI" id="CHEBI:58207"/>
    </ligand>
</feature>
<feature type="binding site" evidence="1">
    <location>
        <position position="114"/>
    </location>
    <ligand>
        <name>5-methyltetrahydropteroyltri-L-glutamate</name>
        <dbReference type="ChEBI" id="CHEBI:58207"/>
    </ligand>
</feature>
<feature type="binding site" evidence="1">
    <location>
        <begin position="428"/>
        <end position="430"/>
    </location>
    <ligand>
        <name>L-homocysteine</name>
        <dbReference type="ChEBI" id="CHEBI:58199"/>
    </ligand>
</feature>
<feature type="binding site" evidence="1">
    <location>
        <begin position="428"/>
        <end position="430"/>
    </location>
    <ligand>
        <name>L-methionine</name>
        <dbReference type="ChEBI" id="CHEBI:57844"/>
    </ligand>
</feature>
<feature type="binding site" evidence="1">
    <location>
        <position position="481"/>
    </location>
    <ligand>
        <name>L-homocysteine</name>
        <dbReference type="ChEBI" id="CHEBI:58199"/>
    </ligand>
</feature>
<feature type="binding site" evidence="1">
    <location>
        <position position="481"/>
    </location>
    <ligand>
        <name>L-methionine</name>
        <dbReference type="ChEBI" id="CHEBI:57844"/>
    </ligand>
</feature>
<feature type="binding site" evidence="1">
    <location>
        <begin position="512"/>
        <end position="513"/>
    </location>
    <ligand>
        <name>5-methyltetrahydropteroyltri-L-glutamate</name>
        <dbReference type="ChEBI" id="CHEBI:58207"/>
    </ligand>
</feature>
<feature type="binding site" evidence="1">
    <location>
        <position position="558"/>
    </location>
    <ligand>
        <name>5-methyltetrahydropteroyltri-L-glutamate</name>
        <dbReference type="ChEBI" id="CHEBI:58207"/>
    </ligand>
</feature>
<feature type="binding site" evidence="1">
    <location>
        <position position="596"/>
    </location>
    <ligand>
        <name>L-homocysteine</name>
        <dbReference type="ChEBI" id="CHEBI:58199"/>
    </ligand>
</feature>
<feature type="binding site" evidence="1">
    <location>
        <position position="596"/>
    </location>
    <ligand>
        <name>L-methionine</name>
        <dbReference type="ChEBI" id="CHEBI:57844"/>
    </ligand>
</feature>
<feature type="binding site" evidence="1">
    <location>
        <position position="602"/>
    </location>
    <ligand>
        <name>5-methyltetrahydropteroyltri-L-glutamate</name>
        <dbReference type="ChEBI" id="CHEBI:58207"/>
    </ligand>
</feature>
<feature type="binding site" evidence="1">
    <location>
        <position position="639"/>
    </location>
    <ligand>
        <name>Zn(2+)</name>
        <dbReference type="ChEBI" id="CHEBI:29105"/>
        <note>catalytic</note>
    </ligand>
</feature>
<feature type="binding site" evidence="1">
    <location>
        <position position="641"/>
    </location>
    <ligand>
        <name>Zn(2+)</name>
        <dbReference type="ChEBI" id="CHEBI:29105"/>
        <note>catalytic</note>
    </ligand>
</feature>
<feature type="binding site" evidence="1">
    <location>
        <position position="663"/>
    </location>
    <ligand>
        <name>Zn(2+)</name>
        <dbReference type="ChEBI" id="CHEBI:29105"/>
        <note>catalytic</note>
    </ligand>
</feature>
<feature type="binding site" evidence="1">
    <location>
        <position position="724"/>
    </location>
    <ligand>
        <name>Zn(2+)</name>
        <dbReference type="ChEBI" id="CHEBI:29105"/>
        <note>catalytic</note>
    </ligand>
</feature>